<comment type="similarity">
    <text evidence="2">Belongs to the WD repeat WDR55 family.</text>
</comment>
<dbReference type="EMBL" id="CH477389">
    <property type="protein sequence ID" value="EAT41996.1"/>
    <property type="molecule type" value="Genomic_DNA"/>
</dbReference>
<dbReference type="RefSeq" id="XP_001657781.1">
    <property type="nucleotide sequence ID" value="XM_001657731.1"/>
</dbReference>
<dbReference type="SMR" id="Q0IF90"/>
<dbReference type="FunCoup" id="Q0IF90">
    <property type="interactions" value="712"/>
</dbReference>
<dbReference type="STRING" id="7159.Q0IF90"/>
<dbReference type="PaxDb" id="7159-AAEL006422-PA"/>
<dbReference type="GeneID" id="5567960"/>
<dbReference type="KEGG" id="aag:5567960"/>
<dbReference type="VEuPathDB" id="VectorBase:AAEL024812"/>
<dbReference type="eggNOG" id="KOG2444">
    <property type="taxonomic scope" value="Eukaryota"/>
</dbReference>
<dbReference type="HOGENOM" id="CLU_035848_1_1_1"/>
<dbReference type="InParanoid" id="Q0IF90"/>
<dbReference type="OMA" id="QAIHPTE"/>
<dbReference type="OrthoDB" id="2288928at2759"/>
<dbReference type="PhylomeDB" id="Q0IF90"/>
<dbReference type="Proteomes" id="UP000008820">
    <property type="component" value="Unassembled WGS sequence"/>
</dbReference>
<dbReference type="Proteomes" id="UP000682892">
    <property type="component" value="Chromosome 2"/>
</dbReference>
<dbReference type="Gene3D" id="2.130.10.10">
    <property type="entry name" value="YVTN repeat-like/Quinoprotein amine dehydrogenase"/>
    <property type="match status" value="2"/>
</dbReference>
<dbReference type="InterPro" id="IPR015943">
    <property type="entry name" value="WD40/YVTN_repeat-like_dom_sf"/>
</dbReference>
<dbReference type="InterPro" id="IPR019775">
    <property type="entry name" value="WD40_repeat_CS"/>
</dbReference>
<dbReference type="InterPro" id="IPR036322">
    <property type="entry name" value="WD40_repeat_dom_sf"/>
</dbReference>
<dbReference type="InterPro" id="IPR001680">
    <property type="entry name" value="WD40_rpt"/>
</dbReference>
<dbReference type="InterPro" id="IPR050505">
    <property type="entry name" value="WDR55_POC1"/>
</dbReference>
<dbReference type="PANTHER" id="PTHR44019">
    <property type="entry name" value="WD REPEAT-CONTAINING PROTEIN 55"/>
    <property type="match status" value="1"/>
</dbReference>
<dbReference type="PANTHER" id="PTHR44019:SF20">
    <property type="entry name" value="WD REPEAT-CONTAINING PROTEIN 55"/>
    <property type="match status" value="1"/>
</dbReference>
<dbReference type="Pfam" id="PF24796">
    <property type="entry name" value="WDR55"/>
    <property type="match status" value="1"/>
</dbReference>
<dbReference type="SMART" id="SM00320">
    <property type="entry name" value="WD40"/>
    <property type="match status" value="5"/>
</dbReference>
<dbReference type="SUPFAM" id="SSF50978">
    <property type="entry name" value="WD40 repeat-like"/>
    <property type="match status" value="1"/>
</dbReference>
<dbReference type="PROSITE" id="PS00678">
    <property type="entry name" value="WD_REPEATS_1"/>
    <property type="match status" value="1"/>
</dbReference>
<dbReference type="PROSITE" id="PS50082">
    <property type="entry name" value="WD_REPEATS_2"/>
    <property type="match status" value="2"/>
</dbReference>
<dbReference type="PROSITE" id="PS50294">
    <property type="entry name" value="WD_REPEATS_REGION"/>
    <property type="match status" value="1"/>
</dbReference>
<keyword id="KW-1185">Reference proteome</keyword>
<keyword id="KW-0677">Repeat</keyword>
<keyword id="KW-0853">WD repeat</keyword>
<proteinExistence type="inferred from homology"/>
<accession>Q0IF90</accession>
<evidence type="ECO:0000256" key="1">
    <source>
        <dbReference type="SAM" id="MobiDB-lite"/>
    </source>
</evidence>
<evidence type="ECO:0000305" key="2"/>
<feature type="chain" id="PRO_0000373957" description="WD repeat-containing protein 55 homolog">
    <location>
        <begin position="1"/>
        <end position="468"/>
    </location>
</feature>
<feature type="repeat" description="WD 1">
    <location>
        <begin position="134"/>
        <end position="173"/>
    </location>
</feature>
<feature type="repeat" description="WD 2">
    <location>
        <begin position="178"/>
        <end position="217"/>
    </location>
</feature>
<feature type="repeat" description="WD 3">
    <location>
        <begin position="221"/>
        <end position="259"/>
    </location>
</feature>
<feature type="repeat" description="WD 4">
    <location>
        <begin position="262"/>
        <end position="301"/>
    </location>
</feature>
<feature type="repeat" description="WD 5">
    <location>
        <begin position="304"/>
        <end position="343"/>
    </location>
</feature>
<feature type="repeat" description="WD 6">
    <location>
        <begin position="388"/>
        <end position="427"/>
    </location>
</feature>
<feature type="region of interest" description="Disordered" evidence="1">
    <location>
        <begin position="1"/>
        <end position="107"/>
    </location>
</feature>
<feature type="compositionally biased region" description="Acidic residues" evidence="1">
    <location>
        <begin position="15"/>
        <end position="26"/>
    </location>
</feature>
<feature type="compositionally biased region" description="Acidic residues" evidence="1">
    <location>
        <begin position="41"/>
        <end position="58"/>
    </location>
</feature>
<feature type="compositionally biased region" description="Acidic residues" evidence="1">
    <location>
        <begin position="67"/>
        <end position="91"/>
    </location>
</feature>
<reference key="1">
    <citation type="journal article" date="2007" name="Science">
        <title>Genome sequence of Aedes aegypti, a major arbovirus vector.</title>
        <authorList>
            <person name="Nene V."/>
            <person name="Wortman J.R."/>
            <person name="Lawson D."/>
            <person name="Haas B.J."/>
            <person name="Kodira C.D."/>
            <person name="Tu Z.J."/>
            <person name="Loftus B.J."/>
            <person name="Xi Z."/>
            <person name="Megy K."/>
            <person name="Grabherr M."/>
            <person name="Ren Q."/>
            <person name="Zdobnov E.M."/>
            <person name="Lobo N.F."/>
            <person name="Campbell K.S."/>
            <person name="Brown S.E."/>
            <person name="Bonaldo M.F."/>
            <person name="Zhu J."/>
            <person name="Sinkins S.P."/>
            <person name="Hogenkamp D.G."/>
            <person name="Amedeo P."/>
            <person name="Arensburger P."/>
            <person name="Atkinson P.W."/>
            <person name="Bidwell S.L."/>
            <person name="Biedler J."/>
            <person name="Birney E."/>
            <person name="Bruggner R.V."/>
            <person name="Costas J."/>
            <person name="Coy M.R."/>
            <person name="Crabtree J."/>
            <person name="Crawford M."/>
            <person name="DeBruyn B."/>
            <person name="DeCaprio D."/>
            <person name="Eiglmeier K."/>
            <person name="Eisenstadt E."/>
            <person name="El-Dorry H."/>
            <person name="Gelbart W.M."/>
            <person name="Gomes S.L."/>
            <person name="Hammond M."/>
            <person name="Hannick L.I."/>
            <person name="Hogan J.R."/>
            <person name="Holmes M.H."/>
            <person name="Jaffe D."/>
            <person name="Johnston S.J."/>
            <person name="Kennedy R.C."/>
            <person name="Koo H."/>
            <person name="Kravitz S."/>
            <person name="Kriventseva E.V."/>
            <person name="Kulp D."/>
            <person name="Labutti K."/>
            <person name="Lee E."/>
            <person name="Li S."/>
            <person name="Lovin D.D."/>
            <person name="Mao C."/>
            <person name="Mauceli E."/>
            <person name="Menck C.F."/>
            <person name="Miller J.R."/>
            <person name="Montgomery P."/>
            <person name="Mori A."/>
            <person name="Nascimento A.L."/>
            <person name="Naveira H.F."/>
            <person name="Nusbaum C."/>
            <person name="O'Leary S.B."/>
            <person name="Orvis J."/>
            <person name="Pertea M."/>
            <person name="Quesneville H."/>
            <person name="Reidenbach K.R."/>
            <person name="Rogers Y.-H.C."/>
            <person name="Roth C.W."/>
            <person name="Schneider J.R."/>
            <person name="Schatz M."/>
            <person name="Shumway M."/>
            <person name="Stanke M."/>
            <person name="Stinson E.O."/>
            <person name="Tubio J.M.C."/>
            <person name="Vanzee J.P."/>
            <person name="Verjovski-Almeida S."/>
            <person name="Werner D."/>
            <person name="White O.R."/>
            <person name="Wyder S."/>
            <person name="Zeng Q."/>
            <person name="Zhao Q."/>
            <person name="Zhao Y."/>
            <person name="Hill C.A."/>
            <person name="Raikhel A.S."/>
            <person name="Soares M.B."/>
            <person name="Knudson D.L."/>
            <person name="Lee N.H."/>
            <person name="Galagan J."/>
            <person name="Salzberg S.L."/>
            <person name="Paulsen I.T."/>
            <person name="Dimopoulos G."/>
            <person name="Collins F.H."/>
            <person name="Bruce B."/>
            <person name="Fraser-Liggett C.M."/>
            <person name="Severson D.W."/>
        </authorList>
    </citation>
    <scope>NUCLEOTIDE SEQUENCE [LARGE SCALE GENOMIC DNA]</scope>
    <source>
        <strain>LVPib12</strain>
    </source>
</reference>
<sequence>MRNFNSPKFGHSMGDDSDDDDFDSGTEPEFLVEPYVLEEFPITEEIEEIEGDDEEYNPNEEIGTSSSDDEDDSDDSDSDKEQENGGEDGEDSSTTNTVPKRVIDDYDEDMEEDEVIKAIITEIKKPRSKPPDIKTEDFVTDLCFHPDQDLLAVGTTTGDVIVYKFTNDECTIVNTHETHTKSVRDVEFNADGDLLISTARDRSIMVTDVETGKLKRFWDDAHEEPVYTMSMITEHTFATGDDGGVLKLWDLRQKDPVFKLKEVEDFISCIITNEQKKYLLMTSGDGYLTTINIPQRKMYVQSEPYEEELTCMGVFRRDSKLVVGSSKGNFYTFNWGQFGYHCDAFIGPKAGVNKMVPITERIAVTGGEDGILRAMHLVPGRVLGIVGQHSLAVETMDINSTGELIASSSHDNDIRFWNIKYFEEFDDIKYNSKPDKKAMTHNLPSSKQTNAADFFSGLAGDQSGAEGD</sequence>
<gene>
    <name type="ORF">AAEL006422</name>
</gene>
<organism>
    <name type="scientific">Aedes aegypti</name>
    <name type="common">Yellowfever mosquito</name>
    <name type="synonym">Culex aegypti</name>
    <dbReference type="NCBI Taxonomy" id="7159"/>
    <lineage>
        <taxon>Eukaryota</taxon>
        <taxon>Metazoa</taxon>
        <taxon>Ecdysozoa</taxon>
        <taxon>Arthropoda</taxon>
        <taxon>Hexapoda</taxon>
        <taxon>Insecta</taxon>
        <taxon>Pterygota</taxon>
        <taxon>Neoptera</taxon>
        <taxon>Endopterygota</taxon>
        <taxon>Diptera</taxon>
        <taxon>Nematocera</taxon>
        <taxon>Culicoidea</taxon>
        <taxon>Culicidae</taxon>
        <taxon>Culicinae</taxon>
        <taxon>Aedini</taxon>
        <taxon>Aedes</taxon>
        <taxon>Stegomyia</taxon>
    </lineage>
</organism>
<protein>
    <recommendedName>
        <fullName>WD repeat-containing protein 55 homolog</fullName>
    </recommendedName>
</protein>
<name>WDR55_AEDAE</name>